<comment type="function">
    <text evidence="1">Catalyzes the NADPH-dependent reduction of glyoxylate and hydroxypyruvate into glycolate and glycerate, respectively.</text>
</comment>
<comment type="catalytic activity">
    <reaction evidence="1">
        <text>glycolate + NADP(+) = glyoxylate + NADPH + H(+)</text>
        <dbReference type="Rhea" id="RHEA:10992"/>
        <dbReference type="ChEBI" id="CHEBI:15378"/>
        <dbReference type="ChEBI" id="CHEBI:29805"/>
        <dbReference type="ChEBI" id="CHEBI:36655"/>
        <dbReference type="ChEBI" id="CHEBI:57783"/>
        <dbReference type="ChEBI" id="CHEBI:58349"/>
        <dbReference type="EC" id="1.1.1.79"/>
    </reaction>
</comment>
<comment type="catalytic activity">
    <reaction evidence="1">
        <text>(R)-glycerate + NAD(+) = 3-hydroxypyruvate + NADH + H(+)</text>
        <dbReference type="Rhea" id="RHEA:17905"/>
        <dbReference type="ChEBI" id="CHEBI:15378"/>
        <dbReference type="ChEBI" id="CHEBI:16659"/>
        <dbReference type="ChEBI" id="CHEBI:17180"/>
        <dbReference type="ChEBI" id="CHEBI:57540"/>
        <dbReference type="ChEBI" id="CHEBI:57945"/>
        <dbReference type="EC" id="1.1.1.81"/>
    </reaction>
</comment>
<comment type="catalytic activity">
    <reaction evidence="1">
        <text>(R)-glycerate + NADP(+) = 3-hydroxypyruvate + NADPH + H(+)</text>
        <dbReference type="Rhea" id="RHEA:18657"/>
        <dbReference type="ChEBI" id="CHEBI:15378"/>
        <dbReference type="ChEBI" id="CHEBI:16659"/>
        <dbReference type="ChEBI" id="CHEBI:17180"/>
        <dbReference type="ChEBI" id="CHEBI:57783"/>
        <dbReference type="ChEBI" id="CHEBI:58349"/>
        <dbReference type="EC" id="1.1.1.81"/>
    </reaction>
</comment>
<comment type="subcellular location">
    <subcellularLocation>
        <location evidence="1">Cytoplasm</location>
    </subcellularLocation>
</comment>
<comment type="similarity">
    <text evidence="1">Belongs to the D-isomer specific 2-hydroxyacid dehydrogenase family. GhrA subfamily.</text>
</comment>
<comment type="sequence caution" evidence="2">
    <conflict type="erroneous initiation">
        <sequence resource="EMBL-CDS" id="ABB61170"/>
    </conflict>
</comment>
<name>GHRA_SHIDS</name>
<gene>
    <name evidence="1" type="primary">ghrA</name>
    <name type="ordered locus">SDY_1004</name>
</gene>
<organism>
    <name type="scientific">Shigella dysenteriae serotype 1 (strain Sd197)</name>
    <dbReference type="NCBI Taxonomy" id="300267"/>
    <lineage>
        <taxon>Bacteria</taxon>
        <taxon>Pseudomonadati</taxon>
        <taxon>Pseudomonadota</taxon>
        <taxon>Gammaproteobacteria</taxon>
        <taxon>Enterobacterales</taxon>
        <taxon>Enterobacteriaceae</taxon>
        <taxon>Shigella</taxon>
    </lineage>
</organism>
<reference key="1">
    <citation type="journal article" date="2005" name="Nucleic Acids Res.">
        <title>Genome dynamics and diversity of Shigella species, the etiologic agents of bacillary dysentery.</title>
        <authorList>
            <person name="Yang F."/>
            <person name="Yang J."/>
            <person name="Zhang X."/>
            <person name="Chen L."/>
            <person name="Jiang Y."/>
            <person name="Yan Y."/>
            <person name="Tang X."/>
            <person name="Wang J."/>
            <person name="Xiong Z."/>
            <person name="Dong J."/>
            <person name="Xue Y."/>
            <person name="Zhu Y."/>
            <person name="Xu X."/>
            <person name="Sun L."/>
            <person name="Chen S."/>
            <person name="Nie H."/>
            <person name="Peng J."/>
            <person name="Xu J."/>
            <person name="Wang Y."/>
            <person name="Yuan Z."/>
            <person name="Wen Y."/>
            <person name="Yao Z."/>
            <person name="Shen Y."/>
            <person name="Qiang B."/>
            <person name="Hou Y."/>
            <person name="Yu J."/>
            <person name="Jin Q."/>
        </authorList>
    </citation>
    <scope>NUCLEOTIDE SEQUENCE [LARGE SCALE GENOMIC DNA]</scope>
    <source>
        <strain>Sd197</strain>
    </source>
</reference>
<accession>Q32HN5</accession>
<feature type="chain" id="PRO_0000348376" description="Glyoxylate/hydroxypyruvate reductase A">
    <location>
        <begin position="1"/>
        <end position="312"/>
    </location>
</feature>
<feature type="active site" evidence="1">
    <location>
        <position position="227"/>
    </location>
</feature>
<feature type="active site" description="Proton donor" evidence="1">
    <location>
        <position position="275"/>
    </location>
</feature>
<proteinExistence type="inferred from homology"/>
<dbReference type="EC" id="1.1.1.79" evidence="1"/>
<dbReference type="EC" id="1.1.1.81" evidence="1"/>
<dbReference type="EMBL" id="CP000034">
    <property type="protein sequence ID" value="ABB61170.1"/>
    <property type="status" value="ALT_INIT"/>
    <property type="molecule type" value="Genomic_DNA"/>
</dbReference>
<dbReference type="RefSeq" id="WP_000351336.1">
    <property type="nucleotide sequence ID" value="NC_007606.1"/>
</dbReference>
<dbReference type="RefSeq" id="YP_402661.1">
    <property type="nucleotide sequence ID" value="NC_007606.1"/>
</dbReference>
<dbReference type="SMR" id="Q32HN5"/>
<dbReference type="STRING" id="300267.SDY_1004"/>
<dbReference type="EnsemblBacteria" id="ABB61170">
    <property type="protein sequence ID" value="ABB61170"/>
    <property type="gene ID" value="SDY_1004"/>
</dbReference>
<dbReference type="KEGG" id="sdy:SDY_1004"/>
<dbReference type="PATRIC" id="fig|300267.13.peg.1173"/>
<dbReference type="HOGENOM" id="CLU_019796_1_0_6"/>
<dbReference type="Proteomes" id="UP000002716">
    <property type="component" value="Chromosome"/>
</dbReference>
<dbReference type="GO" id="GO:0005737">
    <property type="term" value="C:cytoplasm"/>
    <property type="evidence" value="ECO:0007669"/>
    <property type="project" value="UniProtKB-SubCell"/>
</dbReference>
<dbReference type="GO" id="GO:0030267">
    <property type="term" value="F:glyoxylate reductase (NADPH) activity"/>
    <property type="evidence" value="ECO:0007669"/>
    <property type="project" value="UniProtKB-UniRule"/>
</dbReference>
<dbReference type="GO" id="GO:0008465">
    <property type="term" value="F:hydroxypyruvate reductase (NADH) activity"/>
    <property type="evidence" value="ECO:0007669"/>
    <property type="project" value="RHEA"/>
</dbReference>
<dbReference type="GO" id="GO:0120509">
    <property type="term" value="F:hydroxypyruvate reductase (NADPH) activity"/>
    <property type="evidence" value="ECO:0007669"/>
    <property type="project" value="RHEA"/>
</dbReference>
<dbReference type="GO" id="GO:0051287">
    <property type="term" value="F:NAD binding"/>
    <property type="evidence" value="ECO:0007669"/>
    <property type="project" value="InterPro"/>
</dbReference>
<dbReference type="CDD" id="cd12164">
    <property type="entry name" value="GDH_like_2"/>
    <property type="match status" value="1"/>
</dbReference>
<dbReference type="FunFam" id="3.40.50.720:FF:000110">
    <property type="entry name" value="Glyoxylate/hydroxypyruvate reductase A"/>
    <property type="match status" value="1"/>
</dbReference>
<dbReference type="Gene3D" id="3.40.50.720">
    <property type="entry name" value="NAD(P)-binding Rossmann-like Domain"/>
    <property type="match status" value="2"/>
</dbReference>
<dbReference type="HAMAP" id="MF_01666">
    <property type="entry name" value="2_Hacid_dh_C_GhrA"/>
    <property type="match status" value="1"/>
</dbReference>
<dbReference type="InterPro" id="IPR029753">
    <property type="entry name" value="D-isomer_DH_CS"/>
</dbReference>
<dbReference type="InterPro" id="IPR006140">
    <property type="entry name" value="D-isomer_DH_NAD-bd"/>
</dbReference>
<dbReference type="InterPro" id="IPR023514">
    <property type="entry name" value="GhrA_Enterobacterales"/>
</dbReference>
<dbReference type="InterPro" id="IPR036291">
    <property type="entry name" value="NAD(P)-bd_dom_sf"/>
</dbReference>
<dbReference type="NCBIfam" id="NF012013">
    <property type="entry name" value="PRK15469.1"/>
    <property type="match status" value="1"/>
</dbReference>
<dbReference type="PANTHER" id="PTHR43333">
    <property type="entry name" value="2-HACID_DH_C DOMAIN-CONTAINING PROTEIN"/>
    <property type="match status" value="1"/>
</dbReference>
<dbReference type="PANTHER" id="PTHR43333:SF1">
    <property type="entry name" value="D-ISOMER SPECIFIC 2-HYDROXYACID DEHYDROGENASE NAD-BINDING DOMAIN-CONTAINING PROTEIN"/>
    <property type="match status" value="1"/>
</dbReference>
<dbReference type="Pfam" id="PF02826">
    <property type="entry name" value="2-Hacid_dh_C"/>
    <property type="match status" value="1"/>
</dbReference>
<dbReference type="SUPFAM" id="SSF51735">
    <property type="entry name" value="NAD(P)-binding Rossmann-fold domains"/>
    <property type="match status" value="1"/>
</dbReference>
<dbReference type="PROSITE" id="PS00671">
    <property type="entry name" value="D_2_HYDROXYACID_DH_3"/>
    <property type="match status" value="1"/>
</dbReference>
<evidence type="ECO:0000255" key="1">
    <source>
        <dbReference type="HAMAP-Rule" id="MF_01666"/>
    </source>
</evidence>
<evidence type="ECO:0000305" key="2"/>
<sequence>MDIIFYHPTFDTQWWIKALRKAIPQARVRAWKSGDNDSADYALVWHPPVEMLAGRDLKAVFALGAGVDSILSKLQAHPEMLNPYVPLFRLEDTGMGEQMQEYAVSQVLHWFRRFDDYRIQQNSSHWQPLPEYYREDFTIGILGAGVLGSKVAQSLQTWRFPLRCWSRTRKSWPGVQSFAGREELSAFLSQCRVLINLLPNTPETVGIINQQLLEKLPDGAYLLNLARGVHVVEDDLLAALDSGKVKGAMLDVFNREPLPPESPLWQHPRVTITPHVAAITRPAEAVEYISRTIAQLEKGERVCGQVDRARGY</sequence>
<protein>
    <recommendedName>
        <fullName evidence="1">Glyoxylate/hydroxypyruvate reductase A</fullName>
        <ecNumber evidence="1">1.1.1.79</ecNumber>
        <ecNumber evidence="1">1.1.1.81</ecNumber>
    </recommendedName>
    <alternativeName>
        <fullName evidence="1">2-ketoacid reductase</fullName>
    </alternativeName>
</protein>
<keyword id="KW-0963">Cytoplasm</keyword>
<keyword id="KW-0520">NAD</keyword>
<keyword id="KW-0521">NADP</keyword>
<keyword id="KW-0560">Oxidoreductase</keyword>
<keyword id="KW-1185">Reference proteome</keyword>